<proteinExistence type="inferred from homology"/>
<evidence type="ECO:0000250" key="1"/>
<evidence type="ECO:0000255" key="2">
    <source>
        <dbReference type="PROSITE-ProRule" id="PRU00541"/>
    </source>
</evidence>
<evidence type="ECO:0000255" key="3">
    <source>
        <dbReference type="PROSITE-ProRule" id="PRU00542"/>
    </source>
</evidence>
<evidence type="ECO:0000256" key="4">
    <source>
        <dbReference type="SAM" id="MobiDB-lite"/>
    </source>
</evidence>
<evidence type="ECO:0000305" key="5"/>
<name>DBP5_NEUCR</name>
<keyword id="KW-0067">ATP-binding</keyword>
<keyword id="KW-0963">Cytoplasm</keyword>
<keyword id="KW-0347">Helicase</keyword>
<keyword id="KW-0378">Hydrolase</keyword>
<keyword id="KW-0472">Membrane</keyword>
<keyword id="KW-0509">mRNA transport</keyword>
<keyword id="KW-0906">Nuclear pore complex</keyword>
<keyword id="KW-0547">Nucleotide-binding</keyword>
<keyword id="KW-0539">Nucleus</keyword>
<keyword id="KW-0653">Protein transport</keyword>
<keyword id="KW-1185">Reference proteome</keyword>
<keyword id="KW-0694">RNA-binding</keyword>
<keyword id="KW-0811">Translocation</keyword>
<keyword id="KW-0813">Transport</keyword>
<gene>
    <name type="primary">dbp-5</name>
    <name type="ORF">123A4.200</name>
    <name type="ORF">NCU01160</name>
</gene>
<dbReference type="EC" id="3.6.4.13"/>
<dbReference type="EMBL" id="AL670009">
    <property type="protein sequence ID" value="CAD21371.1"/>
    <property type="molecule type" value="Genomic_DNA"/>
</dbReference>
<dbReference type="EMBL" id="CM002240">
    <property type="protein sequence ID" value="EAA32290.1"/>
    <property type="molecule type" value="Genomic_DNA"/>
</dbReference>
<dbReference type="RefSeq" id="XP_961526.1">
    <property type="nucleotide sequence ID" value="XM_956433.2"/>
</dbReference>
<dbReference type="SMR" id="Q8X0X2"/>
<dbReference type="FunCoup" id="Q8X0X2">
    <property type="interactions" value="745"/>
</dbReference>
<dbReference type="STRING" id="367110.Q8X0X2"/>
<dbReference type="PaxDb" id="5141-EFNCRP00000004209"/>
<dbReference type="EnsemblFungi" id="EAA32290">
    <property type="protein sequence ID" value="EAA32290"/>
    <property type="gene ID" value="NCU01160"/>
</dbReference>
<dbReference type="GeneID" id="3877706"/>
<dbReference type="KEGG" id="ncr:NCU01160"/>
<dbReference type="VEuPathDB" id="FungiDB:NCU01160"/>
<dbReference type="HOGENOM" id="CLU_003041_1_0_1"/>
<dbReference type="InParanoid" id="Q8X0X2"/>
<dbReference type="OMA" id="IAAETRW"/>
<dbReference type="OrthoDB" id="10265785at2759"/>
<dbReference type="Proteomes" id="UP000001805">
    <property type="component" value="Chromosome 2, Linkage Group V"/>
</dbReference>
<dbReference type="GO" id="GO:0005934">
    <property type="term" value="C:cellular bud tip"/>
    <property type="evidence" value="ECO:0007669"/>
    <property type="project" value="EnsemblFungi"/>
</dbReference>
<dbReference type="GO" id="GO:0010494">
    <property type="term" value="C:cytoplasmic stress granule"/>
    <property type="evidence" value="ECO:0000318"/>
    <property type="project" value="GO_Central"/>
</dbReference>
<dbReference type="GO" id="GO:0031965">
    <property type="term" value="C:nuclear membrane"/>
    <property type="evidence" value="ECO:0007669"/>
    <property type="project" value="UniProtKB-SubCell"/>
</dbReference>
<dbReference type="GO" id="GO:0044614">
    <property type="term" value="C:nuclear pore cytoplasmic filaments"/>
    <property type="evidence" value="ECO:0007669"/>
    <property type="project" value="EnsemblFungi"/>
</dbReference>
<dbReference type="GO" id="GO:0005634">
    <property type="term" value="C:nucleus"/>
    <property type="evidence" value="ECO:0000318"/>
    <property type="project" value="GO_Central"/>
</dbReference>
<dbReference type="GO" id="GO:0005524">
    <property type="term" value="F:ATP binding"/>
    <property type="evidence" value="ECO:0007669"/>
    <property type="project" value="UniProtKB-KW"/>
</dbReference>
<dbReference type="GO" id="GO:0016887">
    <property type="term" value="F:ATP hydrolysis activity"/>
    <property type="evidence" value="ECO:0007669"/>
    <property type="project" value="RHEA"/>
</dbReference>
<dbReference type="GO" id="GO:0000822">
    <property type="term" value="F:inositol hexakisphosphate binding"/>
    <property type="evidence" value="ECO:0007669"/>
    <property type="project" value="EnsemblFungi"/>
</dbReference>
<dbReference type="GO" id="GO:0003729">
    <property type="term" value="F:mRNA binding"/>
    <property type="evidence" value="ECO:0000318"/>
    <property type="project" value="GO_Central"/>
</dbReference>
<dbReference type="GO" id="GO:0003724">
    <property type="term" value="F:RNA helicase activity"/>
    <property type="evidence" value="ECO:0000318"/>
    <property type="project" value="GO_Central"/>
</dbReference>
<dbReference type="GO" id="GO:0016973">
    <property type="term" value="P:poly(A)+ mRNA export from nucleus"/>
    <property type="evidence" value="ECO:0000318"/>
    <property type="project" value="GO_Central"/>
</dbReference>
<dbReference type="GO" id="GO:0015031">
    <property type="term" value="P:protein transport"/>
    <property type="evidence" value="ECO:0007669"/>
    <property type="project" value="UniProtKB-KW"/>
</dbReference>
<dbReference type="GO" id="GO:0006415">
    <property type="term" value="P:translational termination"/>
    <property type="evidence" value="ECO:0007669"/>
    <property type="project" value="EnsemblFungi"/>
</dbReference>
<dbReference type="GO" id="GO:0006409">
    <property type="term" value="P:tRNA export from nucleus"/>
    <property type="evidence" value="ECO:0007669"/>
    <property type="project" value="EnsemblFungi"/>
</dbReference>
<dbReference type="CDD" id="cd17963">
    <property type="entry name" value="DEADc_DDX19_DDX25"/>
    <property type="match status" value="1"/>
</dbReference>
<dbReference type="CDD" id="cd18787">
    <property type="entry name" value="SF2_C_DEAD"/>
    <property type="match status" value="1"/>
</dbReference>
<dbReference type="FunFam" id="3.40.50.300:FF:000849">
    <property type="entry name" value="ATP-dependent RNA helicase DBP5"/>
    <property type="match status" value="1"/>
</dbReference>
<dbReference type="Gene3D" id="3.40.50.300">
    <property type="entry name" value="P-loop containing nucleotide triphosphate hydrolases"/>
    <property type="match status" value="2"/>
</dbReference>
<dbReference type="InterPro" id="IPR011545">
    <property type="entry name" value="DEAD/DEAH_box_helicase_dom"/>
</dbReference>
<dbReference type="InterPro" id="IPR014001">
    <property type="entry name" value="Helicase_ATP-bd"/>
</dbReference>
<dbReference type="InterPro" id="IPR001650">
    <property type="entry name" value="Helicase_C-like"/>
</dbReference>
<dbReference type="InterPro" id="IPR027417">
    <property type="entry name" value="P-loop_NTPase"/>
</dbReference>
<dbReference type="InterPro" id="IPR000629">
    <property type="entry name" value="RNA-helicase_DEAD-box_CS"/>
</dbReference>
<dbReference type="InterPro" id="IPR014014">
    <property type="entry name" value="RNA_helicase_DEAD_Q_motif"/>
</dbReference>
<dbReference type="PANTHER" id="PTHR47958">
    <property type="entry name" value="ATP-DEPENDENT RNA HELICASE DBP3"/>
    <property type="match status" value="1"/>
</dbReference>
<dbReference type="Pfam" id="PF00270">
    <property type="entry name" value="DEAD"/>
    <property type="match status" value="1"/>
</dbReference>
<dbReference type="Pfam" id="PF00271">
    <property type="entry name" value="Helicase_C"/>
    <property type="match status" value="1"/>
</dbReference>
<dbReference type="SMART" id="SM00487">
    <property type="entry name" value="DEXDc"/>
    <property type="match status" value="1"/>
</dbReference>
<dbReference type="SMART" id="SM00490">
    <property type="entry name" value="HELICc"/>
    <property type="match status" value="1"/>
</dbReference>
<dbReference type="SUPFAM" id="SSF52540">
    <property type="entry name" value="P-loop containing nucleoside triphosphate hydrolases"/>
    <property type="match status" value="1"/>
</dbReference>
<dbReference type="PROSITE" id="PS00039">
    <property type="entry name" value="DEAD_ATP_HELICASE"/>
    <property type="match status" value="1"/>
</dbReference>
<dbReference type="PROSITE" id="PS51192">
    <property type="entry name" value="HELICASE_ATP_BIND_1"/>
    <property type="match status" value="1"/>
</dbReference>
<dbReference type="PROSITE" id="PS51194">
    <property type="entry name" value="HELICASE_CTER"/>
    <property type="match status" value="1"/>
</dbReference>
<dbReference type="PROSITE" id="PS51195">
    <property type="entry name" value="Q_MOTIF"/>
    <property type="match status" value="1"/>
</dbReference>
<feature type="chain" id="PRO_0000232226" description="ATP-dependent RNA helicase dbp-5">
    <location>
        <begin position="1"/>
        <end position="483"/>
    </location>
</feature>
<feature type="domain" description="Helicase ATP-binding" evidence="2">
    <location>
        <begin position="107"/>
        <end position="276"/>
    </location>
</feature>
<feature type="domain" description="Helicase C-terminal" evidence="3">
    <location>
        <begin position="304"/>
        <end position="455"/>
    </location>
</feature>
<feature type="region of interest" description="Disordered" evidence="4">
    <location>
        <begin position="1"/>
        <end position="47"/>
    </location>
</feature>
<feature type="short sequence motif" description="Q motif">
    <location>
        <begin position="74"/>
        <end position="102"/>
    </location>
</feature>
<feature type="short sequence motif" description="DEAD box">
    <location>
        <begin position="223"/>
        <end position="226"/>
    </location>
</feature>
<feature type="compositionally biased region" description="Low complexity" evidence="4">
    <location>
        <begin position="14"/>
        <end position="29"/>
    </location>
</feature>
<feature type="binding site" evidence="2">
    <location>
        <begin position="120"/>
        <end position="127"/>
    </location>
    <ligand>
        <name>ATP</name>
        <dbReference type="ChEBI" id="CHEBI:30616"/>
    </ligand>
</feature>
<comment type="function">
    <text evidence="1">ATP-dependent RNA helicase associated with the nuclear pore complex and essential for mRNA export from the nucleus. May participate in a terminal step of mRNA export through the removal of proteins that accompany mRNA through the nucleopore complex. May also be involved in early transcription (By similarity).</text>
</comment>
<comment type="catalytic activity">
    <reaction>
        <text>ATP + H2O = ADP + phosphate + H(+)</text>
        <dbReference type="Rhea" id="RHEA:13065"/>
        <dbReference type="ChEBI" id="CHEBI:15377"/>
        <dbReference type="ChEBI" id="CHEBI:15378"/>
        <dbReference type="ChEBI" id="CHEBI:30616"/>
        <dbReference type="ChEBI" id="CHEBI:43474"/>
        <dbReference type="ChEBI" id="CHEBI:456216"/>
        <dbReference type="EC" id="3.6.4.13"/>
    </reaction>
</comment>
<comment type="subunit">
    <text evidence="1">Associates with the nuclear pore complex.</text>
</comment>
<comment type="subcellular location">
    <subcellularLocation>
        <location evidence="1">Cytoplasm</location>
    </subcellularLocation>
    <subcellularLocation>
        <location>Nucleus</location>
        <location>Nuclear pore complex</location>
    </subcellularLocation>
    <subcellularLocation>
        <location evidence="1">Nucleus membrane</location>
        <topology evidence="1">Peripheral membrane protein</topology>
        <orientation evidence="1">Cytoplasmic side</orientation>
    </subcellularLocation>
    <text evidence="1">Nuclear pore complex cytoplasmic fibrils.</text>
</comment>
<comment type="domain">
    <text>The Q motif is unique to and characteristic of the DEAD box family of RNA helicases and controls ATP binding and hydrolysis.</text>
</comment>
<comment type="similarity">
    <text evidence="5">Belongs to the DEAD box helicase family. DDX19/DBP5 subfamily.</text>
</comment>
<organism>
    <name type="scientific">Neurospora crassa (strain ATCC 24698 / 74-OR23-1A / CBS 708.71 / DSM 1257 / FGSC 987)</name>
    <dbReference type="NCBI Taxonomy" id="367110"/>
    <lineage>
        <taxon>Eukaryota</taxon>
        <taxon>Fungi</taxon>
        <taxon>Dikarya</taxon>
        <taxon>Ascomycota</taxon>
        <taxon>Pezizomycotina</taxon>
        <taxon>Sordariomycetes</taxon>
        <taxon>Sordariomycetidae</taxon>
        <taxon>Sordariales</taxon>
        <taxon>Sordariaceae</taxon>
        <taxon>Neurospora</taxon>
    </lineage>
</organism>
<accession>Q8X0X2</accession>
<accession>Q1K870</accession>
<sequence>MADLASRITKPDEAPAAAPEAAPVSAPASEEPKAPENETSIEESQSNLVKNEYEVEIKLSDLQNDTESPLYSVSSFDELGLPEAVNRGLLAINFKKPSKVQEKCLPLMLSDPPRNMIAQSQSGTGKTAAFVLTVLSRIDLSKPHQPQALLLAPSRELARQIQTVVQTIGQFCENLIVEAAIPGAISRETGVRGSVVVGTPGTVMDLVKRRQFDISQLKVLVIDEADNMLDQQGLGDQCVRVKNMLPKTIQILLFSATFPDKVLRFAERFAPNANQMKLKHKELTVKGISQMFMDCPTEKDKYDILCKLYGLMTIGSSVIFVRTRETANEIQKRMEADGHKVSALHGAYEGQSRDVLLDEFRSGRSKVLITTNVLARGIDVSSVSMVINYDIPMKGPGEREPDAETYLHRIGRTGRFGRVGVSISFVHDRRSFEALSQIAQFYGIDLIQLNPNDLDDTERKVQEVIKSSRAQAEYVPSATDSAV</sequence>
<protein>
    <recommendedName>
        <fullName>ATP-dependent RNA helicase dbp-5</fullName>
        <ecNumber>3.6.4.13</ecNumber>
    </recommendedName>
</protein>
<reference key="1">
    <citation type="journal article" date="2003" name="Nucleic Acids Res.">
        <title>What's in the genome of a filamentous fungus? Analysis of the Neurospora genome sequence.</title>
        <authorList>
            <person name="Mannhaupt G."/>
            <person name="Montrone C."/>
            <person name="Haase D."/>
            <person name="Mewes H.-W."/>
            <person name="Aign V."/>
            <person name="Hoheisel J.D."/>
            <person name="Fartmann B."/>
            <person name="Nyakatura G."/>
            <person name="Kempken F."/>
            <person name="Maier J."/>
            <person name="Schulte U."/>
        </authorList>
    </citation>
    <scope>NUCLEOTIDE SEQUENCE [LARGE SCALE GENOMIC DNA]</scope>
    <source>
        <strain>ATCC 24698 / 74-OR23-1A / CBS 708.71 / DSM 1257 / FGSC 987</strain>
    </source>
</reference>
<reference key="2">
    <citation type="journal article" date="2003" name="Nature">
        <title>The genome sequence of the filamentous fungus Neurospora crassa.</title>
        <authorList>
            <person name="Galagan J.E."/>
            <person name="Calvo S.E."/>
            <person name="Borkovich K.A."/>
            <person name="Selker E.U."/>
            <person name="Read N.D."/>
            <person name="Jaffe D.B."/>
            <person name="FitzHugh W."/>
            <person name="Ma L.-J."/>
            <person name="Smirnov S."/>
            <person name="Purcell S."/>
            <person name="Rehman B."/>
            <person name="Elkins T."/>
            <person name="Engels R."/>
            <person name="Wang S."/>
            <person name="Nielsen C.B."/>
            <person name="Butler J."/>
            <person name="Endrizzi M."/>
            <person name="Qui D."/>
            <person name="Ianakiev P."/>
            <person name="Bell-Pedersen D."/>
            <person name="Nelson M.A."/>
            <person name="Werner-Washburne M."/>
            <person name="Selitrennikoff C.P."/>
            <person name="Kinsey J.A."/>
            <person name="Braun E.L."/>
            <person name="Zelter A."/>
            <person name="Schulte U."/>
            <person name="Kothe G.O."/>
            <person name="Jedd G."/>
            <person name="Mewes H.-W."/>
            <person name="Staben C."/>
            <person name="Marcotte E."/>
            <person name="Greenberg D."/>
            <person name="Roy A."/>
            <person name="Foley K."/>
            <person name="Naylor J."/>
            <person name="Stange-Thomann N."/>
            <person name="Barrett R."/>
            <person name="Gnerre S."/>
            <person name="Kamal M."/>
            <person name="Kamvysselis M."/>
            <person name="Mauceli E.W."/>
            <person name="Bielke C."/>
            <person name="Rudd S."/>
            <person name="Frishman D."/>
            <person name="Krystofova S."/>
            <person name="Rasmussen C."/>
            <person name="Metzenberg R.L."/>
            <person name="Perkins D.D."/>
            <person name="Kroken S."/>
            <person name="Cogoni C."/>
            <person name="Macino G."/>
            <person name="Catcheside D.E.A."/>
            <person name="Li W."/>
            <person name="Pratt R.J."/>
            <person name="Osmani S.A."/>
            <person name="DeSouza C.P.C."/>
            <person name="Glass N.L."/>
            <person name="Orbach M.J."/>
            <person name="Berglund J.A."/>
            <person name="Voelker R."/>
            <person name="Yarden O."/>
            <person name="Plamann M."/>
            <person name="Seiler S."/>
            <person name="Dunlap J.C."/>
            <person name="Radford A."/>
            <person name="Aramayo R."/>
            <person name="Natvig D.O."/>
            <person name="Alex L.A."/>
            <person name="Mannhaupt G."/>
            <person name="Ebbole D.J."/>
            <person name="Freitag M."/>
            <person name="Paulsen I."/>
            <person name="Sachs M.S."/>
            <person name="Lander E.S."/>
            <person name="Nusbaum C."/>
            <person name="Birren B.W."/>
        </authorList>
    </citation>
    <scope>NUCLEOTIDE SEQUENCE [LARGE SCALE GENOMIC DNA]</scope>
    <source>
        <strain>ATCC 24698 / 74-OR23-1A / CBS 708.71 / DSM 1257 / FGSC 987</strain>
    </source>
</reference>